<accession>A0A7H0DNB6</accession>
<protein>
    <recommendedName>
        <fullName>Virion membrane protein OPG144 precursor</fullName>
    </recommendedName>
    <component>
        <recommendedName>
            <fullName>Mature 21 kDa protein OPG144</fullName>
        </recommendedName>
    </component>
</protein>
<evidence type="ECO:0000250" key="1">
    <source>
        <dbReference type="UniProtKB" id="P68593"/>
    </source>
</evidence>
<evidence type="ECO:0000255" key="2"/>
<evidence type="ECO:0000305" key="3"/>
<keyword id="KW-0067">ATP-binding</keyword>
<keyword id="KW-1015">Disulfide bond</keyword>
<keyword id="KW-0238">DNA-binding</keyword>
<keyword id="KW-0347">Helicase</keyword>
<keyword id="KW-0378">Hydrolase</keyword>
<keyword id="KW-0426">Late protein</keyword>
<keyword id="KW-0472">Membrane</keyword>
<keyword id="KW-0547">Nucleotide-binding</keyword>
<keyword id="KW-0597">Phosphoprotein</keyword>
<keyword id="KW-1185">Reference proteome</keyword>
<keyword id="KW-0804">Transcription</keyword>
<keyword id="KW-0805">Transcription regulation</keyword>
<keyword id="KW-0806">Transcription termination</keyword>
<keyword id="KW-0812">Transmembrane</keyword>
<keyword id="KW-1133">Transmembrane helix</keyword>
<keyword id="KW-0261">Viral envelope protein</keyword>
<keyword id="KW-0946">Virion</keyword>
<reference key="1">
    <citation type="journal article" date="2022" name="J. Infect. Dis.">
        <title>Exportation of Monkeypox virus from the African continent.</title>
        <authorList>
            <person name="Mauldin M.R."/>
            <person name="McCollum A.M."/>
            <person name="Nakazawa Y.J."/>
            <person name="Mandra A."/>
            <person name="Whitehouse E.R."/>
            <person name="Davidson W."/>
            <person name="Zhao H."/>
            <person name="Gao J."/>
            <person name="Li Y."/>
            <person name="Doty J."/>
            <person name="Yinka-Ogunleye A."/>
            <person name="Akinpelu A."/>
            <person name="Aruna O."/>
            <person name="Naidoo D."/>
            <person name="Lewandowski K."/>
            <person name="Afrough B."/>
            <person name="Graham V."/>
            <person name="Aarons E."/>
            <person name="Hewson R."/>
            <person name="Vipond R."/>
            <person name="Dunning J."/>
            <person name="Chand M."/>
            <person name="Brown C."/>
            <person name="Cohen-Gihon I."/>
            <person name="Erez N."/>
            <person name="Shifman O."/>
            <person name="Israeli O."/>
            <person name="Sharon M."/>
            <person name="Schwartz E."/>
            <person name="Beth-Din A."/>
            <person name="Zvi A."/>
            <person name="Mak T.M."/>
            <person name="Ng Y.K."/>
            <person name="Cui L."/>
            <person name="Lin R.T.P."/>
            <person name="Olson V.A."/>
            <person name="Brooks T."/>
            <person name="Paran N."/>
            <person name="Ihekweazu C."/>
            <person name="Reynolds M.G."/>
        </authorList>
    </citation>
    <scope>NUCLEOTIDE SEQUENCE [LARGE SCALE GENOMIC DNA]</scope>
    <source>
        <strain>MPXV-M5312_HM12_Rivers</strain>
    </source>
</reference>
<name>PG144_MONPV</name>
<feature type="chain" id="PRO_0000457532" description="Virion membrane protein OPG144 precursor" evidence="1">
    <location>
        <begin position="1"/>
        <end position="204"/>
    </location>
</feature>
<feature type="propeptide" id="PRO_0000457533" evidence="1">
    <location>
        <begin position="1"/>
        <end position="16"/>
    </location>
</feature>
<feature type="chain" id="PRO_0000457534" description="Mature 21 kDa protein OPG144" evidence="1">
    <location>
        <begin position="17"/>
        <end position="186"/>
    </location>
</feature>
<feature type="propeptide" id="PRO_0000457535" evidence="1">
    <location>
        <begin position="186"/>
        <end position="204"/>
    </location>
</feature>
<feature type="topological domain" description="Virion surface" evidence="3">
    <location>
        <begin position="1"/>
        <end position="66"/>
    </location>
</feature>
<feature type="transmembrane region" description="Helical" evidence="2">
    <location>
        <begin position="67"/>
        <end position="87"/>
    </location>
</feature>
<feature type="topological domain" description="Intravirion" evidence="3">
    <location>
        <begin position="88"/>
        <end position="139"/>
    </location>
</feature>
<feature type="transmembrane region" description="Helical" evidence="2">
    <location>
        <begin position="140"/>
        <end position="160"/>
    </location>
</feature>
<feature type="topological domain" description="Virion surface" evidence="3">
    <location>
        <begin position="161"/>
        <end position="204"/>
    </location>
</feature>
<feature type="region of interest" description="Binding to OPG125 scaffold protein" evidence="1">
    <location>
        <begin position="1"/>
        <end position="38"/>
    </location>
</feature>
<feature type="site" description="Cleavage; by OPG083 protease" evidence="1">
    <location>
        <begin position="16"/>
        <end position="17"/>
    </location>
</feature>
<feature type="site" description="Cleavage; by OPG083 protease" evidence="1">
    <location>
        <begin position="186"/>
        <end position="187"/>
    </location>
</feature>
<feature type="modified residue" description="Phosphotyrosine" evidence="1">
    <location>
        <position position="204"/>
    </location>
</feature>
<feature type="disulfide bond" evidence="1">
    <location>
        <begin position="102"/>
        <end position="122"/>
    </location>
</feature>
<feature type="disulfide bond" description="Interchain" evidence="1">
    <location>
        <position position="179"/>
    </location>
</feature>
<sequence>MSYLRYYNMLDDFSAGAGVLDKDLFTEEQQQSFMPKDGGMMQNDYGGIMNDYLGIFKNNDVRTLLGLILFVLALYSPPLISILMIFISSFLLPLTSLVITYCLVTQMYRGGNGNTVGMSIVCIVAAVIIMAINVFTNSQIFNIISYIILFILFFAFVMNIERQDYKRSINVPIPEQYTCNKPYTAGNKIDVDIPTFNSLNTDDY</sequence>
<gene>
    <name type="primary">OPG144</name>
    <name type="ORF">MPXVgp128</name>
</gene>
<comment type="function">
    <text evidence="1">Envelope protein which participates in virus morphogenesis. Needed for an early step in viral crescent membrane formation by interacting with OPG125 scaffold protein. Its interaction with OPG125 scaffold protein leads to the formation of rigid, crescent-shaped membranes that assemble around the cytoplasmic virus factory. Acts as a membrane anchor for the protein OPG154. OPG144-OPG154 virus envelope protein might be involved in fusion or attachment, and can further associate with OPG153.</text>
</comment>
<comment type="subunit">
    <text evidence="1">Homodimer; disulfide-linked. Interacts (via N-terminus) with OPG125 scaffold; this interaction helps OPG125 to associate with membranes. Interacts with OPG140. Interacts with OPG154; this interaction allows OPG154 to be anchored in the mature virion (MV) membrane. Part of a complex composed of OPG144, OPG153 and OPG154.</text>
</comment>
<comment type="subcellular location">
    <subcellularLocation>
        <location evidence="1">Virion membrane</location>
        <topology evidence="1">Multi-pass membrane protein</topology>
    </subcellularLocation>
    <text evidence="1">The 23 kDa precursor is associated with immature virions (IV) and the final 21 kDa form is present in mature virions (MV).</text>
</comment>
<comment type="PTM">
    <text evidence="1">The 23 kDa precursor is cleaved into a final 21 kDa form by the OPG083 protease during virus maturation.</text>
</comment>
<comment type="PTM">
    <text evidence="1">Phosphorylated on tyrosine and threonine. Its phosphorylation state is regulated by the OPG054 kinase and the OPG106 phosphatase. Phosphorylation by OPG054 kinase seems to be required to form the membranes associated with IV.</text>
</comment>
<comment type="PTM">
    <text evidence="1">Not glycosylated.</text>
</comment>
<comment type="similarity">
    <text evidence="3">Belongs to the orthopoxvirus OPG144 family.</text>
</comment>
<organism>
    <name type="scientific">Monkeypox virus</name>
    <dbReference type="NCBI Taxonomy" id="10244"/>
    <lineage>
        <taxon>Viruses</taxon>
        <taxon>Varidnaviria</taxon>
        <taxon>Bamfordvirae</taxon>
        <taxon>Nucleocytoviricota</taxon>
        <taxon>Pokkesviricetes</taxon>
        <taxon>Chitovirales</taxon>
        <taxon>Poxviridae</taxon>
        <taxon>Chordopoxvirinae</taxon>
        <taxon>Orthopoxvirus</taxon>
    </lineage>
</organism>
<proteinExistence type="inferred from homology"/>
<organismHost>
    <name type="scientific">Cynomys gunnisoni</name>
    <name type="common">Gunnison's prairie dog</name>
    <name type="synonym">Spermophilus gunnisoni</name>
    <dbReference type="NCBI Taxonomy" id="45479"/>
</organismHost>
<organismHost>
    <name type="scientific">Cynomys leucurus</name>
    <name type="common">White-tailed prairie dog</name>
    <dbReference type="NCBI Taxonomy" id="99825"/>
</organismHost>
<organismHost>
    <name type="scientific">Cynomys ludovicianus</name>
    <name type="common">Black-tailed prairie dog</name>
    <dbReference type="NCBI Taxonomy" id="45480"/>
</organismHost>
<organismHost>
    <name type="scientific">Cynomys mexicanus</name>
    <name type="common">Mexican prairie dog</name>
    <dbReference type="NCBI Taxonomy" id="99826"/>
</organismHost>
<organismHost>
    <name type="scientific">Cynomys parvidens</name>
    <name type="common">Utah prairie dog</name>
    <dbReference type="NCBI Taxonomy" id="99827"/>
</organismHost>
<organismHost>
    <name type="scientific">Gliridae</name>
    <name type="common">dormice</name>
    <dbReference type="NCBI Taxonomy" id="30650"/>
</organismHost>
<organismHost>
    <name type="scientific">Heliosciurus ruwenzorii</name>
    <name type="common">Ruwenzori sun squirrel</name>
    <dbReference type="NCBI Taxonomy" id="226685"/>
</organismHost>
<organismHost>
    <name type="scientific">Homo sapiens</name>
    <name type="common">Human</name>
    <dbReference type="NCBI Taxonomy" id="9606"/>
</organismHost>
<organismHost>
    <name type="scientific">Mus musculus</name>
    <name type="common">Mouse</name>
    <dbReference type="NCBI Taxonomy" id="10090"/>
</organismHost>
<dbReference type="EMBL" id="MT903340">
    <property type="protein sequence ID" value="QNP12999.1"/>
    <property type="molecule type" value="Genomic_DNA"/>
</dbReference>
<dbReference type="RefSeq" id="YP_010377126.1">
    <property type="nucleotide sequence ID" value="NC_063383.1"/>
</dbReference>
<dbReference type="SMR" id="A0A7H0DNB6"/>
<dbReference type="GeneID" id="72551539"/>
<dbReference type="Proteomes" id="UP000516359">
    <property type="component" value="Genome"/>
</dbReference>
<dbReference type="GO" id="GO:0016020">
    <property type="term" value="C:membrane"/>
    <property type="evidence" value="ECO:0007669"/>
    <property type="project" value="UniProtKB-KW"/>
</dbReference>
<dbReference type="GO" id="GO:0019031">
    <property type="term" value="C:viral envelope"/>
    <property type="evidence" value="ECO:0007669"/>
    <property type="project" value="UniProtKB-KW"/>
</dbReference>
<dbReference type="GO" id="GO:0055036">
    <property type="term" value="C:virion membrane"/>
    <property type="evidence" value="ECO:0007669"/>
    <property type="project" value="UniProtKB-SubCell"/>
</dbReference>
<dbReference type="GO" id="GO:0005524">
    <property type="term" value="F:ATP binding"/>
    <property type="evidence" value="ECO:0007669"/>
    <property type="project" value="UniProtKB-KW"/>
</dbReference>
<dbReference type="GO" id="GO:0003677">
    <property type="term" value="F:DNA binding"/>
    <property type="evidence" value="ECO:0007669"/>
    <property type="project" value="UniProtKB-KW"/>
</dbReference>
<dbReference type="GO" id="GO:0004386">
    <property type="term" value="F:helicase activity"/>
    <property type="evidence" value="ECO:0007669"/>
    <property type="project" value="UniProtKB-KW"/>
</dbReference>
<dbReference type="GO" id="GO:0016787">
    <property type="term" value="F:hydrolase activity"/>
    <property type="evidence" value="ECO:0007669"/>
    <property type="project" value="UniProtKB-KW"/>
</dbReference>
<dbReference type="GO" id="GO:0006353">
    <property type="term" value="P:DNA-templated transcription termination"/>
    <property type="evidence" value="ECO:0007669"/>
    <property type="project" value="UniProtKB-KW"/>
</dbReference>
<dbReference type="InterPro" id="IPR007977">
    <property type="entry name" value="Poxvirus_OPG144"/>
</dbReference>
<dbReference type="Pfam" id="PF05313">
    <property type="entry name" value="Pox_P21"/>
    <property type="match status" value="1"/>
</dbReference>